<name>PSBD_POPDE</name>
<evidence type="ECO:0000250" key="1">
    <source>
        <dbReference type="UniProtKB" id="P56761"/>
    </source>
</evidence>
<evidence type="ECO:0000255" key="2">
    <source>
        <dbReference type="HAMAP-Rule" id="MF_01383"/>
    </source>
</evidence>
<geneLocation type="chloroplast"/>
<proteinExistence type="inferred from homology"/>
<accession>Q9XQA8</accession>
<feature type="initiator methionine" description="Removed" evidence="1">
    <location>
        <position position="1"/>
    </location>
</feature>
<feature type="chain" id="PRO_0000090518" description="Photosystem II D2 protein">
    <location>
        <begin position="2"/>
        <end position="353"/>
    </location>
</feature>
<feature type="transmembrane region" description="Helical" evidence="2">
    <location>
        <begin position="41"/>
        <end position="61"/>
    </location>
</feature>
<feature type="transmembrane region" description="Helical" evidence="2">
    <location>
        <begin position="125"/>
        <end position="141"/>
    </location>
</feature>
<feature type="transmembrane region" description="Helical" evidence="2">
    <location>
        <begin position="153"/>
        <end position="166"/>
    </location>
</feature>
<feature type="transmembrane region" description="Helical" evidence="2">
    <location>
        <begin position="208"/>
        <end position="228"/>
    </location>
</feature>
<feature type="transmembrane region" description="Helical" evidence="2">
    <location>
        <begin position="279"/>
        <end position="295"/>
    </location>
</feature>
<feature type="binding site" description="axial binding residue" evidence="2">
    <location>
        <position position="118"/>
    </location>
    <ligand>
        <name>chlorophyll a</name>
        <dbReference type="ChEBI" id="CHEBI:58416"/>
        <label>ChlzD2</label>
    </ligand>
    <ligandPart>
        <name>Mg</name>
        <dbReference type="ChEBI" id="CHEBI:25107"/>
    </ligandPart>
</feature>
<feature type="binding site" evidence="2">
    <location>
        <position position="130"/>
    </location>
    <ligand>
        <name>pheophytin a</name>
        <dbReference type="ChEBI" id="CHEBI:136840"/>
        <label>D2</label>
    </ligand>
</feature>
<feature type="binding site" evidence="2">
    <location>
        <position position="143"/>
    </location>
    <ligand>
        <name>pheophytin a</name>
        <dbReference type="ChEBI" id="CHEBI:136840"/>
        <label>D2</label>
    </ligand>
</feature>
<feature type="binding site" description="axial binding residue" evidence="2">
    <location>
        <position position="198"/>
    </location>
    <ligand>
        <name>chlorophyll a</name>
        <dbReference type="ChEBI" id="CHEBI:58416"/>
        <label>PD2</label>
    </ligand>
    <ligandPart>
        <name>Mg</name>
        <dbReference type="ChEBI" id="CHEBI:25107"/>
    </ligandPart>
</feature>
<feature type="binding site" evidence="2">
    <location>
        <position position="215"/>
    </location>
    <ligand>
        <name>a plastoquinone</name>
        <dbReference type="ChEBI" id="CHEBI:17757"/>
        <label>Q(A)</label>
    </ligand>
</feature>
<feature type="binding site" evidence="2">
    <location>
        <position position="215"/>
    </location>
    <ligand>
        <name>Fe cation</name>
        <dbReference type="ChEBI" id="CHEBI:24875"/>
        <note>ligand shared with heterodimeric partner</note>
    </ligand>
</feature>
<feature type="binding site" evidence="2">
    <location>
        <position position="262"/>
    </location>
    <ligand>
        <name>a plastoquinone</name>
        <dbReference type="ChEBI" id="CHEBI:17757"/>
        <label>Q(A)</label>
    </ligand>
</feature>
<feature type="binding site" evidence="2">
    <location>
        <position position="269"/>
    </location>
    <ligand>
        <name>Fe cation</name>
        <dbReference type="ChEBI" id="CHEBI:24875"/>
        <note>ligand shared with heterodimeric partner</note>
    </ligand>
</feature>
<feature type="modified residue" description="N-acetylthreonine" evidence="1">
    <location>
        <position position="2"/>
    </location>
</feature>
<feature type="modified residue" description="Phosphothreonine" evidence="1">
    <location>
        <position position="2"/>
    </location>
</feature>
<gene>
    <name evidence="2" type="primary">psbD</name>
</gene>
<keyword id="KW-0007">Acetylation</keyword>
<keyword id="KW-0148">Chlorophyll</keyword>
<keyword id="KW-0150">Chloroplast</keyword>
<keyword id="KW-0157">Chromophore</keyword>
<keyword id="KW-0249">Electron transport</keyword>
<keyword id="KW-0408">Iron</keyword>
<keyword id="KW-0460">Magnesium</keyword>
<keyword id="KW-0472">Membrane</keyword>
<keyword id="KW-0479">Metal-binding</keyword>
<keyword id="KW-0560">Oxidoreductase</keyword>
<keyword id="KW-0597">Phosphoprotein</keyword>
<keyword id="KW-0602">Photosynthesis</keyword>
<keyword id="KW-0604">Photosystem II</keyword>
<keyword id="KW-0934">Plastid</keyword>
<keyword id="KW-0793">Thylakoid</keyword>
<keyword id="KW-0812">Transmembrane</keyword>
<keyword id="KW-1133">Transmembrane helix</keyword>
<keyword id="KW-0813">Transport</keyword>
<comment type="function">
    <text evidence="2">Photosystem II (PSII) is a light-driven water:plastoquinone oxidoreductase that uses light energy to abstract electrons from H(2)O, generating O(2) and a proton gradient subsequently used for ATP formation. It consists of a core antenna complex that captures photons, and an electron transfer chain that converts photonic excitation into a charge separation. The D1/D2 (PsbA/PsbD) reaction center heterodimer binds P680, the primary electron donor of PSII as well as several subsequent electron acceptors. D2 is needed for assembly of a stable PSII complex.</text>
</comment>
<comment type="catalytic activity">
    <reaction evidence="2">
        <text>2 a plastoquinone + 4 hnu + 2 H2O = 2 a plastoquinol + O2</text>
        <dbReference type="Rhea" id="RHEA:36359"/>
        <dbReference type="Rhea" id="RHEA-COMP:9561"/>
        <dbReference type="Rhea" id="RHEA-COMP:9562"/>
        <dbReference type="ChEBI" id="CHEBI:15377"/>
        <dbReference type="ChEBI" id="CHEBI:15379"/>
        <dbReference type="ChEBI" id="CHEBI:17757"/>
        <dbReference type="ChEBI" id="CHEBI:30212"/>
        <dbReference type="ChEBI" id="CHEBI:62192"/>
        <dbReference type="EC" id="1.10.3.9"/>
    </reaction>
</comment>
<comment type="cofactor">
    <text evidence="2">The D1/D2 heterodimer binds P680, chlorophylls that are the primary electron donor of PSII, and subsequent electron acceptors. It shares a non-heme iron and each subunit binds pheophytin, quinone, additional chlorophylls, carotenoids and lipids. There is also a Cl(-1) ion associated with D1 and D2, which is required for oxygen evolution. The PSII complex binds additional chlorophylls, carotenoids and specific lipids.</text>
</comment>
<comment type="subunit">
    <text evidence="2">PSII is composed of 1 copy each of membrane proteins PsbA, PsbB, PsbC, PsbD, PsbE, PsbF, PsbH, PsbI, PsbJ, PsbK, PsbL, PsbM, PsbT, PsbX, PsbY, PsbZ, Psb30/Ycf12, at least 3 peripheral proteins of the oxygen-evolving complex and a large number of cofactors. It forms dimeric complexes.</text>
</comment>
<comment type="subcellular location">
    <subcellularLocation>
        <location evidence="2">Plastid</location>
        <location evidence="2">Chloroplast thylakoid membrane</location>
        <topology evidence="2">Multi-pass membrane protein</topology>
    </subcellularLocation>
</comment>
<comment type="miscellaneous">
    <text evidence="2">2 of the reaction center chlorophylls (ChlD1 and ChlD2) are entirely coordinated by water.</text>
</comment>
<comment type="similarity">
    <text evidence="2">Belongs to the reaction center PufL/M/PsbA/D family.</text>
</comment>
<organism>
    <name type="scientific">Populus deltoides</name>
    <name type="common">Eastern poplar</name>
    <name type="synonym">Eastern cottonwood</name>
    <dbReference type="NCBI Taxonomy" id="3696"/>
    <lineage>
        <taxon>Eukaryota</taxon>
        <taxon>Viridiplantae</taxon>
        <taxon>Streptophyta</taxon>
        <taxon>Embryophyta</taxon>
        <taxon>Tracheophyta</taxon>
        <taxon>Spermatophyta</taxon>
        <taxon>Magnoliopsida</taxon>
        <taxon>eudicotyledons</taxon>
        <taxon>Gunneridae</taxon>
        <taxon>Pentapetalae</taxon>
        <taxon>rosids</taxon>
        <taxon>fabids</taxon>
        <taxon>Malpighiales</taxon>
        <taxon>Salicaceae</taxon>
        <taxon>Saliceae</taxon>
        <taxon>Populus</taxon>
    </lineage>
</organism>
<reference key="1">
    <citation type="journal article" date="1988" name="J. Genet.">
        <title>Cloning and nucleotide sequence analysis of psbD/C operon from chloroplast of Populus deltoides.</title>
        <authorList>
            <person name="Reddy M.S.S."/>
            <person name="Trivedi P.K."/>
            <person name="Tuli R."/>
            <person name="Sane P.V."/>
        </authorList>
    </citation>
    <scope>NUCLEOTIDE SEQUENCE [GENOMIC DNA]</scope>
    <source>
        <strain>cv. Stoneville D121</strain>
    </source>
</reference>
<protein>
    <recommendedName>
        <fullName evidence="2">Photosystem II D2 protein</fullName>
        <shortName evidence="2">PSII D2 protein</shortName>
        <ecNumber evidence="2">1.10.3.9</ecNumber>
    </recommendedName>
    <alternativeName>
        <fullName evidence="2">Photosystem Q(A) protein</fullName>
    </alternativeName>
</protein>
<sequence>MTIALGKFTKDENDLFDIMDDWLRRDRFVFVGWSGLLVFPCAYFALGGWFTGTTFVTSWYTHGWASSYLEGCNFLTAAVSTPANSLAHSLLLLWGPEAQGDFTRWCQLGGFWTFVALHGAFGLIGFMLRQFELARSVQLRPYNAIAFSAPIAVFVSVFLIYPLGQSGWFFAPSFGVAAIFRFILFFQGFHNWTLNPFHMMGVAGVLGAALLCAIHGATVENTLFEDGDGANTFRAFNPTQAEETYSMVTANRFWSQIFGVAFSNKRWLHFFMLFVPVTGLWMSALGVVGLALNLRAYDFVSQEIRAAEDPEFETFYTKNILLNEGIRAWMAAQDQPHENLIFPEEVLPRGNAL</sequence>
<dbReference type="EC" id="1.10.3.9" evidence="2"/>
<dbReference type="EMBL" id="AF134324">
    <property type="protein sequence ID" value="AAD24582.1"/>
    <property type="molecule type" value="Genomic_DNA"/>
</dbReference>
<dbReference type="SMR" id="Q9XQA8"/>
<dbReference type="GO" id="GO:0009535">
    <property type="term" value="C:chloroplast thylakoid membrane"/>
    <property type="evidence" value="ECO:0007669"/>
    <property type="project" value="UniProtKB-SubCell"/>
</dbReference>
<dbReference type="GO" id="GO:0009523">
    <property type="term" value="C:photosystem II"/>
    <property type="evidence" value="ECO:0007669"/>
    <property type="project" value="UniProtKB-KW"/>
</dbReference>
<dbReference type="GO" id="GO:0016168">
    <property type="term" value="F:chlorophyll binding"/>
    <property type="evidence" value="ECO:0007669"/>
    <property type="project" value="UniProtKB-UniRule"/>
</dbReference>
<dbReference type="GO" id="GO:0045156">
    <property type="term" value="F:electron transporter, transferring electrons within the cyclic electron transport pathway of photosynthesis activity"/>
    <property type="evidence" value="ECO:0007669"/>
    <property type="project" value="InterPro"/>
</dbReference>
<dbReference type="GO" id="GO:0005506">
    <property type="term" value="F:iron ion binding"/>
    <property type="evidence" value="ECO:0007669"/>
    <property type="project" value="UniProtKB-UniRule"/>
</dbReference>
<dbReference type="GO" id="GO:0010242">
    <property type="term" value="F:oxygen evolving activity"/>
    <property type="evidence" value="ECO:0007669"/>
    <property type="project" value="UniProtKB-EC"/>
</dbReference>
<dbReference type="GO" id="GO:0009772">
    <property type="term" value="P:photosynthetic electron transport in photosystem II"/>
    <property type="evidence" value="ECO:0007669"/>
    <property type="project" value="InterPro"/>
</dbReference>
<dbReference type="CDD" id="cd09288">
    <property type="entry name" value="Photosystem-II_D2"/>
    <property type="match status" value="1"/>
</dbReference>
<dbReference type="FunFam" id="1.20.85.10:FF:000001">
    <property type="entry name" value="photosystem II D2 protein-like"/>
    <property type="match status" value="1"/>
</dbReference>
<dbReference type="Gene3D" id="1.20.85.10">
    <property type="entry name" value="Photosystem II protein D1-like"/>
    <property type="match status" value="1"/>
</dbReference>
<dbReference type="HAMAP" id="MF_01383">
    <property type="entry name" value="PSII_PsbD_D2"/>
    <property type="match status" value="1"/>
</dbReference>
<dbReference type="InterPro" id="IPR055266">
    <property type="entry name" value="D1/D2"/>
</dbReference>
<dbReference type="InterPro" id="IPR036854">
    <property type="entry name" value="Photo_II_D1/D2_sf"/>
</dbReference>
<dbReference type="InterPro" id="IPR000484">
    <property type="entry name" value="Photo_RC_L/M"/>
</dbReference>
<dbReference type="InterPro" id="IPR055265">
    <property type="entry name" value="Photo_RC_L/M_CS"/>
</dbReference>
<dbReference type="InterPro" id="IPR005868">
    <property type="entry name" value="PSII_PsbD/D2"/>
</dbReference>
<dbReference type="NCBIfam" id="TIGR01152">
    <property type="entry name" value="psbD"/>
    <property type="match status" value="1"/>
</dbReference>
<dbReference type="PANTHER" id="PTHR33149:SF12">
    <property type="entry name" value="PHOTOSYSTEM II D2 PROTEIN"/>
    <property type="match status" value="1"/>
</dbReference>
<dbReference type="PANTHER" id="PTHR33149">
    <property type="entry name" value="PHOTOSYSTEM II PROTEIN D1"/>
    <property type="match status" value="1"/>
</dbReference>
<dbReference type="Pfam" id="PF00124">
    <property type="entry name" value="Photo_RC"/>
    <property type="match status" value="1"/>
</dbReference>
<dbReference type="PRINTS" id="PR00256">
    <property type="entry name" value="REACTNCENTRE"/>
</dbReference>
<dbReference type="SUPFAM" id="SSF81483">
    <property type="entry name" value="Bacterial photosystem II reaction centre, L and M subunits"/>
    <property type="match status" value="1"/>
</dbReference>
<dbReference type="PROSITE" id="PS00244">
    <property type="entry name" value="REACTION_CENTER"/>
    <property type="match status" value="1"/>
</dbReference>